<protein>
    <recommendedName>
        <fullName evidence="1">tRNA-cytidine(32) 2-sulfurtransferase 2</fullName>
        <ecNumber evidence="1">2.8.1.-</ecNumber>
    </recommendedName>
    <alternativeName>
        <fullName evidence="1">Two-thiocytidine biosynthesis protein A 2</fullName>
    </alternativeName>
    <alternativeName>
        <fullName evidence="1">tRNA 2-thiocytidine biosynthesis protein TtcA 2</fullName>
    </alternativeName>
</protein>
<reference key="1">
    <citation type="journal article" date="2007" name="PLoS ONE">
        <title>Genome sequencing shows that European isolates of Francisella tularensis subspecies tularensis are almost identical to US laboratory strain Schu S4.</title>
        <authorList>
            <person name="Chaudhuri R.R."/>
            <person name="Ren C.-P."/>
            <person name="Desmond L."/>
            <person name="Vincent G.A."/>
            <person name="Silman N.J."/>
            <person name="Brehm J.K."/>
            <person name="Elmore M.J."/>
            <person name="Hudson M.J."/>
            <person name="Forsman M."/>
            <person name="Isherwood K.E."/>
            <person name="Gurycova D."/>
            <person name="Minton N.P."/>
            <person name="Titball R.W."/>
            <person name="Pallen M.J."/>
            <person name="Vipond R."/>
        </authorList>
    </citation>
    <scope>NUCLEOTIDE SEQUENCE [LARGE SCALE GENOMIC DNA]</scope>
    <source>
        <strain>FSC 198</strain>
    </source>
</reference>
<proteinExistence type="inferred from homology"/>
<comment type="function">
    <text evidence="1">Catalyzes the ATP-dependent 2-thiolation of cytidine in position 32 of tRNA, to form 2-thiocytidine (s(2)C32). The sulfur atoms are provided by the cysteine/cysteine desulfurase (IscS) system.</text>
</comment>
<comment type="catalytic activity">
    <reaction evidence="1">
        <text>cytidine(32) in tRNA + S-sulfanyl-L-cysteinyl-[cysteine desulfurase] + AH2 + ATP = 2-thiocytidine(32) in tRNA + L-cysteinyl-[cysteine desulfurase] + A + AMP + diphosphate + H(+)</text>
        <dbReference type="Rhea" id="RHEA:57048"/>
        <dbReference type="Rhea" id="RHEA-COMP:10288"/>
        <dbReference type="Rhea" id="RHEA-COMP:12157"/>
        <dbReference type="Rhea" id="RHEA-COMP:12158"/>
        <dbReference type="Rhea" id="RHEA-COMP:14821"/>
        <dbReference type="ChEBI" id="CHEBI:13193"/>
        <dbReference type="ChEBI" id="CHEBI:15378"/>
        <dbReference type="ChEBI" id="CHEBI:17499"/>
        <dbReference type="ChEBI" id="CHEBI:29950"/>
        <dbReference type="ChEBI" id="CHEBI:30616"/>
        <dbReference type="ChEBI" id="CHEBI:33019"/>
        <dbReference type="ChEBI" id="CHEBI:61963"/>
        <dbReference type="ChEBI" id="CHEBI:82748"/>
        <dbReference type="ChEBI" id="CHEBI:141453"/>
        <dbReference type="ChEBI" id="CHEBI:456215"/>
    </reaction>
    <physiologicalReaction direction="left-to-right" evidence="1">
        <dbReference type="Rhea" id="RHEA:57049"/>
    </physiologicalReaction>
</comment>
<comment type="cofactor">
    <cofactor evidence="1">
        <name>Mg(2+)</name>
        <dbReference type="ChEBI" id="CHEBI:18420"/>
    </cofactor>
</comment>
<comment type="cofactor">
    <cofactor evidence="1">
        <name>[4Fe-4S] cluster</name>
        <dbReference type="ChEBI" id="CHEBI:49883"/>
    </cofactor>
    <text evidence="1">Binds 1 [4Fe-4S] cluster per subunit. The cluster is chelated by three Cys residues, the fourth Fe has a free coordination site that may bind a sulfur atom transferred from the persulfide of IscS.</text>
</comment>
<comment type="pathway">
    <text evidence="1">tRNA modification.</text>
</comment>
<comment type="subunit">
    <text evidence="1">Homodimer.</text>
</comment>
<comment type="subcellular location">
    <subcellularLocation>
        <location evidence="1">Cytoplasm</location>
    </subcellularLocation>
</comment>
<comment type="miscellaneous">
    <text evidence="1">The thiolation reaction likely consists of two steps: a first activation step by ATP to form an adenylated intermediate of the target base of tRNA, and a second nucleophilic substitution step of the sulfur (S) atom supplied by the hydrosulfide attached to the Fe-S cluster.</text>
</comment>
<comment type="similarity">
    <text evidence="1">Belongs to the TtcA family.</text>
</comment>
<keyword id="KW-0004">4Fe-4S</keyword>
<keyword id="KW-0067">ATP-binding</keyword>
<keyword id="KW-0963">Cytoplasm</keyword>
<keyword id="KW-0408">Iron</keyword>
<keyword id="KW-0411">Iron-sulfur</keyword>
<keyword id="KW-0460">Magnesium</keyword>
<keyword id="KW-0479">Metal-binding</keyword>
<keyword id="KW-0547">Nucleotide-binding</keyword>
<keyword id="KW-0694">RNA-binding</keyword>
<keyword id="KW-0808">Transferase</keyword>
<keyword id="KW-0819">tRNA processing</keyword>
<keyword id="KW-0820">tRNA-binding</keyword>
<name>TTCA2_FRAT1</name>
<feature type="chain" id="PRO_0000348741" description="tRNA-cytidine(32) 2-sulfurtransferase 2">
    <location>
        <begin position="1"/>
        <end position="251"/>
    </location>
</feature>
<feature type="short sequence motif" description="PP-loop motif" evidence="1">
    <location>
        <begin position="33"/>
        <end position="38"/>
    </location>
</feature>
<feature type="binding site" evidence="1">
    <location>
        <position position="108"/>
    </location>
    <ligand>
        <name>[4Fe-4S] cluster</name>
        <dbReference type="ChEBI" id="CHEBI:49883"/>
    </ligand>
</feature>
<feature type="binding site" evidence="1">
    <location>
        <position position="111"/>
    </location>
    <ligand>
        <name>[4Fe-4S] cluster</name>
        <dbReference type="ChEBI" id="CHEBI:49883"/>
    </ligand>
</feature>
<feature type="binding site" evidence="1">
    <location>
        <position position="199"/>
    </location>
    <ligand>
        <name>[4Fe-4S] cluster</name>
        <dbReference type="ChEBI" id="CHEBI:49883"/>
    </ligand>
</feature>
<evidence type="ECO:0000255" key="1">
    <source>
        <dbReference type="HAMAP-Rule" id="MF_01850"/>
    </source>
</evidence>
<dbReference type="EC" id="2.8.1.-" evidence="1"/>
<dbReference type="EMBL" id="AM286280">
    <property type="protein sequence ID" value="CAL09203.1"/>
    <property type="molecule type" value="Genomic_DNA"/>
</dbReference>
<dbReference type="SMR" id="Q14H45"/>
<dbReference type="KEGG" id="ftf:FTF1187"/>
<dbReference type="HOGENOM" id="CLU_026481_0_0_6"/>
<dbReference type="GO" id="GO:0005737">
    <property type="term" value="C:cytoplasm"/>
    <property type="evidence" value="ECO:0007669"/>
    <property type="project" value="UniProtKB-SubCell"/>
</dbReference>
<dbReference type="GO" id="GO:0051539">
    <property type="term" value="F:4 iron, 4 sulfur cluster binding"/>
    <property type="evidence" value="ECO:0007669"/>
    <property type="project" value="UniProtKB-UniRule"/>
</dbReference>
<dbReference type="GO" id="GO:0005524">
    <property type="term" value="F:ATP binding"/>
    <property type="evidence" value="ECO:0007669"/>
    <property type="project" value="UniProtKB-UniRule"/>
</dbReference>
<dbReference type="GO" id="GO:0000287">
    <property type="term" value="F:magnesium ion binding"/>
    <property type="evidence" value="ECO:0007669"/>
    <property type="project" value="UniProtKB-UniRule"/>
</dbReference>
<dbReference type="GO" id="GO:0016783">
    <property type="term" value="F:sulfurtransferase activity"/>
    <property type="evidence" value="ECO:0007669"/>
    <property type="project" value="UniProtKB-UniRule"/>
</dbReference>
<dbReference type="GO" id="GO:0000049">
    <property type="term" value="F:tRNA binding"/>
    <property type="evidence" value="ECO:0007669"/>
    <property type="project" value="UniProtKB-KW"/>
</dbReference>
<dbReference type="GO" id="GO:0034227">
    <property type="term" value="P:tRNA thio-modification"/>
    <property type="evidence" value="ECO:0007669"/>
    <property type="project" value="UniProtKB-UniRule"/>
</dbReference>
<dbReference type="CDD" id="cd24138">
    <property type="entry name" value="TtcA-like"/>
    <property type="match status" value="1"/>
</dbReference>
<dbReference type="Gene3D" id="3.40.50.620">
    <property type="entry name" value="HUPs"/>
    <property type="match status" value="1"/>
</dbReference>
<dbReference type="HAMAP" id="MF_01850">
    <property type="entry name" value="TtcA"/>
    <property type="match status" value="1"/>
</dbReference>
<dbReference type="InterPro" id="IPR014729">
    <property type="entry name" value="Rossmann-like_a/b/a_fold"/>
</dbReference>
<dbReference type="InterPro" id="IPR011063">
    <property type="entry name" value="TilS/TtcA_N"/>
</dbReference>
<dbReference type="InterPro" id="IPR012089">
    <property type="entry name" value="tRNA_Cyd_32_2_STrfase"/>
</dbReference>
<dbReference type="InterPro" id="IPR035107">
    <property type="entry name" value="tRNA_thiolation_TtcA_Ctu1"/>
</dbReference>
<dbReference type="NCBIfam" id="NF007972">
    <property type="entry name" value="PRK10696.1"/>
    <property type="match status" value="1"/>
</dbReference>
<dbReference type="PANTHER" id="PTHR43686:SF1">
    <property type="entry name" value="AMINOTRAN_5 DOMAIN-CONTAINING PROTEIN"/>
    <property type="match status" value="1"/>
</dbReference>
<dbReference type="PANTHER" id="PTHR43686">
    <property type="entry name" value="SULFURTRANSFERASE-RELATED"/>
    <property type="match status" value="1"/>
</dbReference>
<dbReference type="Pfam" id="PF01171">
    <property type="entry name" value="ATP_bind_3"/>
    <property type="match status" value="1"/>
</dbReference>
<dbReference type="PIRSF" id="PIRSF004976">
    <property type="entry name" value="ATPase_YdaO"/>
    <property type="match status" value="1"/>
</dbReference>
<dbReference type="SUPFAM" id="SSF52402">
    <property type="entry name" value="Adenine nucleotide alpha hydrolases-like"/>
    <property type="match status" value="1"/>
</dbReference>
<sequence>MTKTEKKLRHYITKAIADYKLLDKGDKVMLCLSGGKDSFGLLKVLHGLIEDKTYDIDLHVYTLDQSQPGWDDSQLRKYLDDLGVSYEIETKNTYGVIIDKVPEGKTYCSLCSRLRRGNIYRYAKEHKMDKIILGHHRDDLIQSLLMSILYQGQIKSMPPKFVTQDGENTVIRPMVLVQERDLIEFAKEENFPIIPCNLCGSQENLKRKKVKKLIQDLALENPKVPSNILNSLSNVLPSHLMDKNLLNSLEN</sequence>
<accession>Q14H45</accession>
<gene>
    <name evidence="1" type="primary">ttcA2</name>
    <name type="ordered locus">FTF1187</name>
</gene>
<organism>
    <name type="scientific">Francisella tularensis subsp. tularensis (strain FSC 198)</name>
    <dbReference type="NCBI Taxonomy" id="393115"/>
    <lineage>
        <taxon>Bacteria</taxon>
        <taxon>Pseudomonadati</taxon>
        <taxon>Pseudomonadota</taxon>
        <taxon>Gammaproteobacteria</taxon>
        <taxon>Thiotrichales</taxon>
        <taxon>Francisellaceae</taxon>
        <taxon>Francisella</taxon>
    </lineage>
</organism>